<evidence type="ECO:0000250" key="1">
    <source>
        <dbReference type="UniProtKB" id="P00403"/>
    </source>
</evidence>
<evidence type="ECO:0000250" key="2">
    <source>
        <dbReference type="UniProtKB" id="P00410"/>
    </source>
</evidence>
<evidence type="ECO:0000250" key="3">
    <source>
        <dbReference type="UniProtKB" id="P68530"/>
    </source>
</evidence>
<evidence type="ECO:0000305" key="4"/>
<feature type="chain" id="PRO_0000183565" description="Cytochrome c oxidase subunit 2">
    <location>
        <begin position="1"/>
        <end position="227"/>
    </location>
</feature>
<feature type="topological domain" description="Mitochondrial intermembrane" evidence="3">
    <location>
        <begin position="1"/>
        <end position="14"/>
    </location>
</feature>
<feature type="transmembrane region" description="Helical; Name=I" evidence="3">
    <location>
        <begin position="15"/>
        <end position="45"/>
    </location>
</feature>
<feature type="topological domain" description="Mitochondrial matrix" evidence="3">
    <location>
        <begin position="46"/>
        <end position="59"/>
    </location>
</feature>
<feature type="transmembrane region" description="Helical; Name=II" evidence="3">
    <location>
        <begin position="60"/>
        <end position="87"/>
    </location>
</feature>
<feature type="topological domain" description="Mitochondrial intermembrane" evidence="3">
    <location>
        <begin position="88"/>
        <end position="227"/>
    </location>
</feature>
<feature type="binding site" evidence="3">
    <location>
        <position position="161"/>
    </location>
    <ligand>
        <name>Cu cation</name>
        <dbReference type="ChEBI" id="CHEBI:23378"/>
        <label>A1</label>
    </ligand>
</feature>
<feature type="binding site" evidence="3">
    <location>
        <position position="196"/>
    </location>
    <ligand>
        <name>Cu cation</name>
        <dbReference type="ChEBI" id="CHEBI:23378"/>
        <label>A1</label>
    </ligand>
</feature>
<feature type="binding site" evidence="3">
    <location>
        <position position="196"/>
    </location>
    <ligand>
        <name>Cu cation</name>
        <dbReference type="ChEBI" id="CHEBI:23378"/>
        <label>A2</label>
    </ligand>
</feature>
<feature type="binding site" evidence="3">
    <location>
        <position position="198"/>
    </location>
    <ligand>
        <name>Cu cation</name>
        <dbReference type="ChEBI" id="CHEBI:23378"/>
        <label>A2</label>
    </ligand>
</feature>
<feature type="binding site" evidence="3">
    <location>
        <position position="198"/>
    </location>
    <ligand>
        <name>Mg(2+)</name>
        <dbReference type="ChEBI" id="CHEBI:18420"/>
        <note>ligand shared with MT-CO1</note>
    </ligand>
</feature>
<feature type="binding site" evidence="3">
    <location>
        <position position="200"/>
    </location>
    <ligand>
        <name>Cu cation</name>
        <dbReference type="ChEBI" id="CHEBI:23378"/>
        <label>A1</label>
    </ligand>
</feature>
<feature type="binding site" evidence="3">
    <location>
        <position position="200"/>
    </location>
    <ligand>
        <name>Cu cation</name>
        <dbReference type="ChEBI" id="CHEBI:23378"/>
        <label>A2</label>
    </ligand>
</feature>
<feature type="binding site" evidence="3">
    <location>
        <position position="204"/>
    </location>
    <ligand>
        <name>Cu cation</name>
        <dbReference type="ChEBI" id="CHEBI:23378"/>
        <label>A2</label>
    </ligand>
</feature>
<feature type="binding site" evidence="3">
    <location>
        <position position="207"/>
    </location>
    <ligand>
        <name>Cu cation</name>
        <dbReference type="ChEBI" id="CHEBI:23378"/>
        <label>A1</label>
    </ligand>
</feature>
<sequence length="227" mass="25965">MAYPMQLGLQDATSPIMEELLHFHDHTLMIVFLISSLVLYIISLMLTTKLTHTSTMDAQEVETIWTILPAIILIMIALPSLRILYMMDEINNPSLTVKTMGHQWYWSYEYTDYEDLSFDSYMIPTSDLKPGELRLLEVDNRVVLPMEMTVRMLISSEDVLHSWAVPSLGLKTDAVPGRLNQTTLMSTRPGLYYGQCSEICGSNHSFMPIVLELVPLKHFEKWSASML</sequence>
<proteinExistence type="inferred from homology"/>
<dbReference type="EC" id="7.1.1.9"/>
<dbReference type="EMBL" id="U18823">
    <property type="protein sequence ID" value="AAA75611.1"/>
    <property type="molecule type" value="Genomic_DNA"/>
</dbReference>
<dbReference type="SMR" id="P50679"/>
<dbReference type="CTD" id="4513"/>
<dbReference type="GO" id="GO:0005743">
    <property type="term" value="C:mitochondrial inner membrane"/>
    <property type="evidence" value="ECO:0007669"/>
    <property type="project" value="UniProtKB-SubCell"/>
</dbReference>
<dbReference type="GO" id="GO:0045277">
    <property type="term" value="C:respiratory chain complex IV"/>
    <property type="evidence" value="ECO:0000250"/>
    <property type="project" value="UniProtKB"/>
</dbReference>
<dbReference type="GO" id="GO:0005507">
    <property type="term" value="F:copper ion binding"/>
    <property type="evidence" value="ECO:0007669"/>
    <property type="project" value="InterPro"/>
</dbReference>
<dbReference type="GO" id="GO:0004129">
    <property type="term" value="F:cytochrome-c oxidase activity"/>
    <property type="evidence" value="ECO:0007669"/>
    <property type="project" value="UniProtKB-EC"/>
</dbReference>
<dbReference type="GO" id="GO:0042773">
    <property type="term" value="P:ATP synthesis coupled electron transport"/>
    <property type="evidence" value="ECO:0007669"/>
    <property type="project" value="TreeGrafter"/>
</dbReference>
<dbReference type="CDD" id="cd13912">
    <property type="entry name" value="CcO_II_C"/>
    <property type="match status" value="1"/>
</dbReference>
<dbReference type="FunFam" id="1.10.287.90:FF:000001">
    <property type="entry name" value="Cytochrome c oxidase subunit 2"/>
    <property type="match status" value="1"/>
</dbReference>
<dbReference type="FunFam" id="2.60.40.420:FF:000001">
    <property type="entry name" value="Cytochrome c oxidase subunit 2"/>
    <property type="match status" value="1"/>
</dbReference>
<dbReference type="Gene3D" id="1.10.287.90">
    <property type="match status" value="1"/>
</dbReference>
<dbReference type="Gene3D" id="2.60.40.420">
    <property type="entry name" value="Cupredoxins - blue copper proteins"/>
    <property type="match status" value="1"/>
</dbReference>
<dbReference type="InterPro" id="IPR045187">
    <property type="entry name" value="CcO_II"/>
</dbReference>
<dbReference type="InterPro" id="IPR002429">
    <property type="entry name" value="CcO_II-like_C"/>
</dbReference>
<dbReference type="InterPro" id="IPR034210">
    <property type="entry name" value="CcO_II_C"/>
</dbReference>
<dbReference type="InterPro" id="IPR001505">
    <property type="entry name" value="Copper_CuA"/>
</dbReference>
<dbReference type="InterPro" id="IPR008972">
    <property type="entry name" value="Cupredoxin"/>
</dbReference>
<dbReference type="InterPro" id="IPR014222">
    <property type="entry name" value="Cyt_c_oxidase_su2"/>
</dbReference>
<dbReference type="InterPro" id="IPR011759">
    <property type="entry name" value="Cyt_c_oxidase_su2_TM_dom"/>
</dbReference>
<dbReference type="InterPro" id="IPR036257">
    <property type="entry name" value="Cyt_c_oxidase_su2_TM_sf"/>
</dbReference>
<dbReference type="NCBIfam" id="TIGR02866">
    <property type="entry name" value="CoxB"/>
    <property type="match status" value="1"/>
</dbReference>
<dbReference type="PANTHER" id="PTHR22888:SF9">
    <property type="entry name" value="CYTOCHROME C OXIDASE SUBUNIT 2"/>
    <property type="match status" value="1"/>
</dbReference>
<dbReference type="PANTHER" id="PTHR22888">
    <property type="entry name" value="CYTOCHROME C OXIDASE, SUBUNIT II"/>
    <property type="match status" value="1"/>
</dbReference>
<dbReference type="Pfam" id="PF00116">
    <property type="entry name" value="COX2"/>
    <property type="match status" value="1"/>
</dbReference>
<dbReference type="Pfam" id="PF02790">
    <property type="entry name" value="COX2_TM"/>
    <property type="match status" value="1"/>
</dbReference>
<dbReference type="PRINTS" id="PR01166">
    <property type="entry name" value="CYCOXIDASEII"/>
</dbReference>
<dbReference type="SUPFAM" id="SSF49503">
    <property type="entry name" value="Cupredoxins"/>
    <property type="match status" value="1"/>
</dbReference>
<dbReference type="SUPFAM" id="SSF81464">
    <property type="entry name" value="Cytochrome c oxidase subunit II-like, transmembrane region"/>
    <property type="match status" value="1"/>
</dbReference>
<dbReference type="PROSITE" id="PS00078">
    <property type="entry name" value="COX2"/>
    <property type="match status" value="1"/>
</dbReference>
<dbReference type="PROSITE" id="PS50857">
    <property type="entry name" value="COX2_CUA"/>
    <property type="match status" value="1"/>
</dbReference>
<dbReference type="PROSITE" id="PS50999">
    <property type="entry name" value="COX2_TM"/>
    <property type="match status" value="1"/>
</dbReference>
<reference key="1">
    <citation type="journal article" date="1995" name="J. Mol. Evol.">
        <title>Mammalian mitochondrial DNA evolution: a comparison of the cytochrome b and cytochrome c oxidase II genes.</title>
        <authorList>
            <person name="Honeycutt R.L."/>
            <person name="Nedbal M.A."/>
            <person name="Adkins R.M."/>
            <person name="Janecek L.L."/>
        </authorList>
    </citation>
    <scope>NUCLEOTIDE SEQUENCE [GENOMIC DNA]</scope>
</reference>
<accession>P50679</accession>
<gene>
    <name type="primary">MT-CO2</name>
    <name type="synonym">COII</name>
    <name type="synonym">COXII</name>
    <name type="synonym">MTCO2</name>
</gene>
<keyword id="KW-0186">Copper</keyword>
<keyword id="KW-0249">Electron transport</keyword>
<keyword id="KW-0460">Magnesium</keyword>
<keyword id="KW-0472">Membrane</keyword>
<keyword id="KW-0479">Metal-binding</keyword>
<keyword id="KW-0496">Mitochondrion</keyword>
<keyword id="KW-0999">Mitochondrion inner membrane</keyword>
<keyword id="KW-0679">Respiratory chain</keyword>
<keyword id="KW-1278">Translocase</keyword>
<keyword id="KW-0812">Transmembrane</keyword>
<keyword id="KW-1133">Transmembrane helix</keyword>
<keyword id="KW-0813">Transport</keyword>
<geneLocation type="mitochondrion"/>
<protein>
    <recommendedName>
        <fullName>Cytochrome c oxidase subunit 2</fullName>
        <ecNumber>7.1.1.9</ecNumber>
    </recommendedName>
    <alternativeName>
        <fullName>Cytochrome c oxidase polypeptide II</fullName>
    </alternativeName>
</protein>
<comment type="function">
    <text evidence="2">Component of the cytochrome c oxidase, the last enzyme in the mitochondrial electron transport chain which drives oxidative phosphorylation. The respiratory chain contains 3 multisubunit complexes succinate dehydrogenase (complex II, CII), ubiquinol-cytochrome c oxidoreductase (cytochrome b-c1 complex, complex III, CIII) and cytochrome c oxidase (complex IV, CIV), that cooperate to transfer electrons derived from NADH and succinate to molecular oxygen, creating an electrochemical gradient over the inner membrane that drives transmembrane transport and the ATP synthase. Cytochrome c oxidase is the component of the respiratory chain that catalyzes the reduction of oxygen to water. Electrons originating from reduced cytochrome c in the intermembrane space (IMS) are transferred via the dinuclear copper A center (CU(A)) of subunit 2 and heme A of subunit 1 to the active site in subunit 1, a binuclear center (BNC) formed by heme A3 and copper B (CU(B)). The BNC reduces molecular oxygen to 2 water molecules using 4 electrons from cytochrome c in the IMS and 4 protons from the mitochondrial matrix.</text>
</comment>
<comment type="catalytic activity">
    <reaction evidence="2">
        <text>4 Fe(II)-[cytochrome c] + O2 + 8 H(+)(in) = 4 Fe(III)-[cytochrome c] + 2 H2O + 4 H(+)(out)</text>
        <dbReference type="Rhea" id="RHEA:11436"/>
        <dbReference type="Rhea" id="RHEA-COMP:10350"/>
        <dbReference type="Rhea" id="RHEA-COMP:14399"/>
        <dbReference type="ChEBI" id="CHEBI:15377"/>
        <dbReference type="ChEBI" id="CHEBI:15378"/>
        <dbReference type="ChEBI" id="CHEBI:15379"/>
        <dbReference type="ChEBI" id="CHEBI:29033"/>
        <dbReference type="ChEBI" id="CHEBI:29034"/>
        <dbReference type="EC" id="7.1.1.9"/>
    </reaction>
    <physiologicalReaction direction="left-to-right" evidence="2">
        <dbReference type="Rhea" id="RHEA:11437"/>
    </physiologicalReaction>
</comment>
<comment type="cofactor">
    <cofactor evidence="3">
        <name>Cu cation</name>
        <dbReference type="ChEBI" id="CHEBI:23378"/>
    </cofactor>
    <text evidence="3">Binds a dinuclear copper A center per subunit.</text>
</comment>
<comment type="subunit">
    <text evidence="1 3">Component of the cytochrome c oxidase (complex IV, CIV), a multisubunit enzyme composed of 14 subunits. The complex is composed of a catalytic core of 3 subunits MT-CO1, MT-CO2 and MT-CO3, encoded in the mitochondrial DNA, and 11 supernumerary subunits COX4I, COX5A, COX5B, COX6A, COX6B, COX6C, COX7A, COX7B, COX7C, COX8 and NDUFA4, which are encoded in the nuclear genome. The complex exists as a monomer or a dimer and forms supercomplexes (SCs) in the inner mitochondrial membrane with NADH-ubiquinone oxidoreductase (complex I, CI) and ubiquinol-cytochrome c oxidoreductase (cytochrome b-c1 complex, complex III, CIII), resulting in different assemblies (supercomplex SCI(1)III(2)IV(1) and megacomplex MCI(2)III(2)IV(2)) (By similarity). Found in a complex with TMEM177, COA6, COX18, COX20, SCO1 and SCO2. Interacts with TMEM177 in a COX20-dependent manner. Interacts with COX20. Interacts with COX16 (By similarity).</text>
</comment>
<comment type="subcellular location">
    <subcellularLocation>
        <location evidence="3">Mitochondrion inner membrane</location>
        <topology evidence="3">Multi-pass membrane protein</topology>
    </subcellularLocation>
</comment>
<comment type="similarity">
    <text evidence="4">Belongs to the cytochrome c oxidase subunit 2 family.</text>
</comment>
<name>COX2_DAMPP</name>
<organism>
    <name type="scientific">Damaliscus pygargus phillipsi</name>
    <name type="common">Blesbok</name>
    <name type="synonym">Damaliscus dorcas phillipsi</name>
    <dbReference type="NCBI Taxonomy" id="37172"/>
    <lineage>
        <taxon>Eukaryota</taxon>
        <taxon>Metazoa</taxon>
        <taxon>Chordata</taxon>
        <taxon>Craniata</taxon>
        <taxon>Vertebrata</taxon>
        <taxon>Euteleostomi</taxon>
        <taxon>Mammalia</taxon>
        <taxon>Eutheria</taxon>
        <taxon>Laurasiatheria</taxon>
        <taxon>Artiodactyla</taxon>
        <taxon>Ruminantia</taxon>
        <taxon>Pecora</taxon>
        <taxon>Bovidae</taxon>
        <taxon>Alcelaphinae</taxon>
        <taxon>Damaliscus</taxon>
    </lineage>
</organism>